<sequence length="555" mass="61164">MELERTTIARMLFDRLGDDRLGVRTREQDWTWDEVVRESAARGAVASSLRRDGPFHVGVLLENTPEFLFWLGGAALAGAAVVGVNPTRRGAELEAEIRYVDCQLIVTDTAGKAQLAGLDLGLSEDRFLLVDDPAYTELVAAHAVESPAEDPGIDASTLFLLLFTSGTTGTSKAVRCSQGRLARLAYANTAKYGHVREDVDYCCMPLFHGNALMALWAPALANGATVCLPRKFSASGFLPDVRFFGATFFTYVGKALAYLMATPEQPDDRDNTLVRGFGTEASPEDKTEFVRRFGAELYEGYGSSEGAGSVTLDPDAPEGALGRPANENIVIVDPDTRVEKARARLDEHGRVLNPDEAIGEMVDKAGASRFEGYYKNEDAIADRIRHGWYWTGDLGYVDEAGFIYFAGRKGDWIRVDGENTSALMVERILRRHPKVVATGVFAVPDPRSGDQVMAAVEVADPTDFDPAEFAAFLGNQDDLGTKAAPRFVRVSRDLPVTGSNKVLKRTLQEQRWRCDDPVFRWVGRGVPEYHEMTDSEKAVLEQEFHTHGRQRFLHV</sequence>
<evidence type="ECO:0000269" key="1">
    <source>
    </source>
</evidence>
<evidence type="ECO:0000269" key="2">
    <source>
    </source>
</evidence>
<evidence type="ECO:0000269" key="3">
    <source>
    </source>
</evidence>
<evidence type="ECO:0000303" key="4">
    <source>
    </source>
</evidence>
<evidence type="ECO:0000303" key="5">
    <source>
    </source>
</evidence>
<evidence type="ECO:0000303" key="6">
    <source>
    </source>
</evidence>
<evidence type="ECO:0000305" key="7"/>
<evidence type="ECO:0000312" key="8">
    <source>
        <dbReference type="EMBL" id="ABG97599.1"/>
    </source>
</evidence>
<comment type="function">
    <text evidence="2 3">Involved in cholate catabolism (PubMed:23024343, PubMed:24244004). Catalyzes the ATP-dependent formation of CoA thioesters of steroids with isopropanoyl side chains, likely occurring as degradation intermediates (PubMed:23024343, PubMed:24244004). Can use 4-BNC, HSBNC and HIDP as substrate (PubMed:23024343, PubMed:24244004).</text>
</comment>
<comment type="catalytic activity">
    <reaction evidence="1 2 3">
        <text>3-oxochol-4-en-22-oate + ATP + CoA = 3-oxochol-4-en-22-oyl-CoA + AMP + diphosphate</text>
        <dbReference type="Rhea" id="RHEA:43872"/>
        <dbReference type="ChEBI" id="CHEBI:30616"/>
        <dbReference type="ChEBI" id="CHEBI:33019"/>
        <dbReference type="ChEBI" id="CHEBI:57287"/>
        <dbReference type="ChEBI" id="CHEBI:83777"/>
        <dbReference type="ChEBI" id="CHEBI:83792"/>
        <dbReference type="ChEBI" id="CHEBI:456215"/>
    </reaction>
    <physiologicalReaction direction="left-to-right" evidence="1 2 3">
        <dbReference type="Rhea" id="RHEA:43873"/>
    </physiologicalReaction>
</comment>
<comment type="catalytic activity">
    <reaction evidence="3">
        <text>3-hydroxy-9-oxo-9,10-seco-chola-1,3,5-trien-22-oate + ATP + CoA = 3-hydroxy-9-oxo-9,10-seco-chola-1,3,5-trien-22-oyl-CoA + AMP + diphosphate</text>
        <dbReference type="Rhea" id="RHEA:43876"/>
        <dbReference type="ChEBI" id="CHEBI:30616"/>
        <dbReference type="ChEBI" id="CHEBI:33019"/>
        <dbReference type="ChEBI" id="CHEBI:57287"/>
        <dbReference type="ChEBI" id="CHEBI:83794"/>
        <dbReference type="ChEBI" id="CHEBI:83797"/>
        <dbReference type="ChEBI" id="CHEBI:456215"/>
    </reaction>
    <physiologicalReaction direction="left-to-right" evidence="3">
        <dbReference type="Rhea" id="RHEA:43877"/>
    </physiologicalReaction>
</comment>
<comment type="biophysicochemical properties">
    <kinetics>
        <KM evidence="3">75 uM for 4-BNC</KM>
        <KM evidence="3">500 uM for HSBNC</KM>
        <KM evidence="3">190 uM for HIDP</KM>
        <text evidence="3">kcat is 18 sec(-1) with 4-BNC as substrate. kcat is 1.4 sec(-1) with HSBNC as substrate. kcat is 60 sec(-1) with HIDP as substrate.</text>
    </kinetics>
</comment>
<comment type="pathway">
    <text evidence="2 3">Steroid metabolism.</text>
</comment>
<comment type="induction">
    <text evidence="2">Up-regulated on cholate.</text>
</comment>
<comment type="similarity">
    <text evidence="7">Belongs to the ATP-dependent AMP-binding enzyme family.</text>
</comment>
<organism>
    <name type="scientific">Rhodococcus jostii (strain RHA1)</name>
    <dbReference type="NCBI Taxonomy" id="101510"/>
    <lineage>
        <taxon>Bacteria</taxon>
        <taxon>Bacillati</taxon>
        <taxon>Actinomycetota</taxon>
        <taxon>Actinomycetes</taxon>
        <taxon>Mycobacteriales</taxon>
        <taxon>Nocardiaceae</taxon>
        <taxon>Rhodococcus</taxon>
    </lineage>
</organism>
<name>CASI_RHOJR</name>
<feature type="chain" id="PRO_0000452102" description="Steroid-22-oyl-CoA synthetase">
    <location>
        <begin position="1"/>
        <end position="555"/>
    </location>
</feature>
<protein>
    <recommendedName>
        <fullName evidence="6">Steroid-22-oyl-CoA synthetase</fullName>
        <ecNumber evidence="1 2 3">6.2.1.-</ecNumber>
    </recommendedName>
    <alternativeName>
        <fullName evidence="5">Steroid-CoA synthetase</fullName>
    </alternativeName>
</protein>
<gene>
    <name evidence="4" type="primary">casI</name>
    <name evidence="8" type="ordered locus">RHA1_ro05822</name>
</gene>
<proteinExistence type="evidence at protein level"/>
<accession>Q0S4D7</accession>
<keyword id="KW-0067">ATP-binding</keyword>
<keyword id="KW-0436">Ligase</keyword>
<keyword id="KW-0443">Lipid metabolism</keyword>
<keyword id="KW-0547">Nucleotide-binding</keyword>
<keyword id="KW-0753">Steroid metabolism</keyword>
<dbReference type="EC" id="6.2.1.-" evidence="1 2 3"/>
<dbReference type="EMBL" id="CP000431">
    <property type="protein sequence ID" value="ABG97599.1"/>
    <property type="molecule type" value="Genomic_DNA"/>
</dbReference>
<dbReference type="RefSeq" id="WP_011597926.1">
    <property type="nucleotide sequence ID" value="NC_008268.1"/>
</dbReference>
<dbReference type="SMR" id="Q0S4D7"/>
<dbReference type="SwissLipids" id="SLP:000001001"/>
<dbReference type="KEGG" id="rha:RHA1_ro05822"/>
<dbReference type="PATRIC" id="fig|101510.16.peg.5861"/>
<dbReference type="eggNOG" id="COG0318">
    <property type="taxonomic scope" value="Bacteria"/>
</dbReference>
<dbReference type="HOGENOM" id="CLU_000022_59_10_11"/>
<dbReference type="OrthoDB" id="9803968at2"/>
<dbReference type="Proteomes" id="UP000008710">
    <property type="component" value="Chromosome"/>
</dbReference>
<dbReference type="GO" id="GO:0005886">
    <property type="term" value="C:plasma membrane"/>
    <property type="evidence" value="ECO:0007669"/>
    <property type="project" value="TreeGrafter"/>
</dbReference>
<dbReference type="GO" id="GO:0005524">
    <property type="term" value="F:ATP binding"/>
    <property type="evidence" value="ECO:0007669"/>
    <property type="project" value="UniProtKB-KW"/>
</dbReference>
<dbReference type="GO" id="GO:0005324">
    <property type="term" value="F:long-chain fatty acid transmembrane transporter activity"/>
    <property type="evidence" value="ECO:0007669"/>
    <property type="project" value="TreeGrafter"/>
</dbReference>
<dbReference type="GO" id="GO:0004467">
    <property type="term" value="F:long-chain fatty acid-CoA ligase activity"/>
    <property type="evidence" value="ECO:0007669"/>
    <property type="project" value="TreeGrafter"/>
</dbReference>
<dbReference type="GO" id="GO:0044539">
    <property type="term" value="P:long-chain fatty acid import into cell"/>
    <property type="evidence" value="ECO:0007669"/>
    <property type="project" value="TreeGrafter"/>
</dbReference>
<dbReference type="GO" id="GO:0008202">
    <property type="term" value="P:steroid metabolic process"/>
    <property type="evidence" value="ECO:0007669"/>
    <property type="project" value="UniProtKB-KW"/>
</dbReference>
<dbReference type="Gene3D" id="3.30.300.30">
    <property type="match status" value="1"/>
</dbReference>
<dbReference type="Gene3D" id="3.40.50.12780">
    <property type="entry name" value="N-terminal domain of ligase-like"/>
    <property type="match status" value="1"/>
</dbReference>
<dbReference type="InterPro" id="IPR025110">
    <property type="entry name" value="AMP-bd_C"/>
</dbReference>
<dbReference type="InterPro" id="IPR045851">
    <property type="entry name" value="AMP-bd_C_sf"/>
</dbReference>
<dbReference type="InterPro" id="IPR020845">
    <property type="entry name" value="AMP-binding_CS"/>
</dbReference>
<dbReference type="InterPro" id="IPR000873">
    <property type="entry name" value="AMP-dep_synth/lig_dom"/>
</dbReference>
<dbReference type="InterPro" id="IPR042099">
    <property type="entry name" value="ANL_N_sf"/>
</dbReference>
<dbReference type="PANTHER" id="PTHR43107:SF15">
    <property type="entry name" value="FATTY ACID TRANSPORT PROTEIN 3, ISOFORM A"/>
    <property type="match status" value="1"/>
</dbReference>
<dbReference type="PANTHER" id="PTHR43107">
    <property type="entry name" value="LONG-CHAIN FATTY ACID TRANSPORT PROTEIN"/>
    <property type="match status" value="1"/>
</dbReference>
<dbReference type="Pfam" id="PF00501">
    <property type="entry name" value="AMP-binding"/>
    <property type="match status" value="1"/>
</dbReference>
<dbReference type="Pfam" id="PF13193">
    <property type="entry name" value="AMP-binding_C"/>
    <property type="match status" value="1"/>
</dbReference>
<dbReference type="SUPFAM" id="SSF56801">
    <property type="entry name" value="Acetyl-CoA synthetase-like"/>
    <property type="match status" value="1"/>
</dbReference>
<dbReference type="PROSITE" id="PS00455">
    <property type="entry name" value="AMP_BINDING"/>
    <property type="match status" value="1"/>
</dbReference>
<reference key="1">
    <citation type="journal article" date="2006" name="Proc. Natl. Acad. Sci. U.S.A.">
        <title>The complete genome of Rhodococcus sp. RHA1 provides insights into a catabolic powerhouse.</title>
        <authorList>
            <person name="McLeod M.P."/>
            <person name="Warren R.L."/>
            <person name="Hsiao W.W.L."/>
            <person name="Araki N."/>
            <person name="Myhre M."/>
            <person name="Fernandes C."/>
            <person name="Miyazawa D."/>
            <person name="Wong W."/>
            <person name="Lillquist A.L."/>
            <person name="Wang D."/>
            <person name="Dosanjh M."/>
            <person name="Hara H."/>
            <person name="Petrescu A."/>
            <person name="Morin R.D."/>
            <person name="Yang G."/>
            <person name="Stott J.M."/>
            <person name="Schein J.E."/>
            <person name="Shin H."/>
            <person name="Smailus D."/>
            <person name="Siddiqui A.S."/>
            <person name="Marra M.A."/>
            <person name="Jones S.J.M."/>
            <person name="Holt R."/>
            <person name="Brinkman F.S.L."/>
            <person name="Miyauchi K."/>
            <person name="Fukuda M."/>
            <person name="Davies J.E."/>
            <person name="Mohn W.W."/>
            <person name="Eltis L.D."/>
        </authorList>
    </citation>
    <scope>NUCLEOTIDE SEQUENCE [LARGE SCALE GENOMIC DNA]</scope>
    <source>
        <strain>RHA1</strain>
    </source>
</reference>
<reference key="2">
    <citation type="journal article" date="2011" name="J. Biol. Chem.">
        <title>Activity of 3-ketosteroid 9alpha-hydroxylase (KshAB) indicates cholesterol side chain and ring degradation occur simultaneously in Mycobacterium tuberculosis.</title>
        <authorList>
            <person name="Capyk J.K."/>
            <person name="Casabon I."/>
            <person name="Gruninger R."/>
            <person name="Strynadka N.C."/>
            <person name="Eltis L.D."/>
        </authorList>
    </citation>
    <scope>CATALYTIC ACTIVITY</scope>
</reference>
<reference key="3">
    <citation type="journal article" date="2012" name="J. Bacteriol.">
        <title>Gene cluster encoding cholate catabolism in Rhodococcus spp.</title>
        <authorList>
            <person name="Mohn W.W."/>
            <person name="Wilbrink M.H."/>
            <person name="Casabon I."/>
            <person name="Stewart G.R."/>
            <person name="Liu J."/>
            <person name="van der Geize R."/>
            <person name="Eltis L.D."/>
        </authorList>
    </citation>
    <scope>FUNCTION</scope>
    <scope>CATALYTIC ACTIVITY</scope>
    <scope>PATHWAY</scope>
    <scope>INDUCTION</scope>
    <source>
        <strain>RHA1</strain>
    </source>
</reference>
<reference key="4">
    <citation type="journal article" date="2014" name="J. Bacteriol.">
        <title>Actinobacterial acyl coenzyme A synthetases involved in steroid side-chain catabolism.</title>
        <authorList>
            <person name="Casabon I."/>
            <person name="Swain K."/>
            <person name="Crowe A.M."/>
            <person name="Eltis L.D."/>
            <person name="Mohn W.W."/>
        </authorList>
    </citation>
    <scope>FUNCTION</scope>
    <scope>CATALYTIC ACTIVITY</scope>
    <scope>BIOPHYSICOCHEMICAL PROPERTIES</scope>
    <scope>PATHWAY</scope>
    <source>
        <strain>RHA1</strain>
    </source>
</reference>